<keyword id="KW-0140">cGMP</keyword>
<keyword id="KW-0142">cGMP-binding</keyword>
<keyword id="KW-0325">Glycoprotein</keyword>
<keyword id="KW-0407">Ion channel</keyword>
<keyword id="KW-0406">Ion transport</keyword>
<keyword id="KW-1071">Ligand-gated ion channel</keyword>
<keyword id="KW-0472">Membrane</keyword>
<keyword id="KW-0547">Nucleotide-binding</keyword>
<keyword id="KW-1185">Reference proteome</keyword>
<keyword id="KW-0812">Transmembrane</keyword>
<keyword id="KW-1133">Transmembrane helix</keyword>
<keyword id="KW-0813">Transport</keyword>
<proteinExistence type="evidence at transcript level"/>
<evidence type="ECO:0000250" key="1"/>
<evidence type="ECO:0000255" key="2"/>
<evidence type="ECO:0000256" key="3">
    <source>
        <dbReference type="SAM" id="MobiDB-lite"/>
    </source>
</evidence>
<evidence type="ECO:0000269" key="4">
    <source>
    </source>
</evidence>
<evidence type="ECO:0000305" key="5"/>
<gene>
    <name type="primary">CngA</name>
    <name type="synonym">Cng</name>
    <name type="ORF">CG7779</name>
</gene>
<comment type="function">
    <text evidence="4">Approximately 50-fold more sensitive to cGMP than to cAMP. May be involved in transduction cascades of both invertebrate photoreceptors and olfactory sensillae.</text>
</comment>
<comment type="subcellular location">
    <subcellularLocation>
        <location evidence="5">Membrane</location>
        <topology evidence="5">Multi-pass membrane protein</topology>
    </subcellularLocation>
</comment>
<comment type="tissue specificity">
    <text evidence="4">Expressed in antennae and the visual system.</text>
</comment>
<comment type="similarity">
    <text evidence="5">Belongs to the cyclic nucleotide-gated cation channel (TC 1.A.1.5) family.</text>
</comment>
<feature type="chain" id="PRO_0000219327" description="Cyclic nucleotide-gated cation channel subunit A">
    <location>
        <begin position="1"/>
        <end position="665"/>
    </location>
</feature>
<feature type="topological domain" description="Cytoplasmic" evidence="2">
    <location>
        <begin position="1"/>
        <end position="110"/>
    </location>
</feature>
<feature type="transmembrane region" description="Helical; Name=H1" evidence="2">
    <location>
        <begin position="111"/>
        <end position="131"/>
    </location>
</feature>
<feature type="topological domain" description="Extracellular" evidence="2">
    <location>
        <begin position="132"/>
        <end position="138"/>
    </location>
</feature>
<feature type="transmembrane region" description="Helical; Name=H2" evidence="2">
    <location>
        <begin position="139"/>
        <end position="159"/>
    </location>
</feature>
<feature type="topological domain" description="Cytoplasmic" evidence="2">
    <location>
        <begin position="160"/>
        <end position="186"/>
    </location>
</feature>
<feature type="transmembrane region" description="Helical; Name=H3" evidence="2">
    <location>
        <begin position="187"/>
        <end position="207"/>
    </location>
</feature>
<feature type="topological domain" description="Extracellular" evidence="2">
    <location>
        <begin position="208"/>
        <end position="253"/>
    </location>
</feature>
<feature type="transmembrane region" description="Helical; Name=H4" evidence="2">
    <location>
        <begin position="254"/>
        <end position="274"/>
    </location>
</feature>
<feature type="topological domain" description="Cytoplasmic" evidence="2">
    <location>
        <begin position="275"/>
        <end position="325"/>
    </location>
</feature>
<feature type="transmembrane region" description="Helical; Name=H5" evidence="2">
    <location>
        <begin position="326"/>
        <end position="346"/>
    </location>
</feature>
<feature type="topological domain" description="Extracellular" evidence="2">
    <location>
        <begin position="347"/>
        <end position="481"/>
    </location>
</feature>
<feature type="transmembrane region" description="Helical; Name=H6" evidence="2">
    <location>
        <begin position="482"/>
        <end position="502"/>
    </location>
</feature>
<feature type="topological domain" description="Cytoplasmic" evidence="2">
    <location>
        <begin position="503"/>
        <end position="665"/>
    </location>
</feature>
<feature type="region of interest" description="Disordered" evidence="3">
    <location>
        <begin position="633"/>
        <end position="665"/>
    </location>
</feature>
<feature type="compositionally biased region" description="Polar residues" evidence="3">
    <location>
        <begin position="654"/>
        <end position="665"/>
    </location>
</feature>
<feature type="binding site" evidence="1">
    <location>
        <begin position="437"/>
        <end position="559"/>
    </location>
    <ligand>
        <name>3',5'-cyclic GMP</name>
        <dbReference type="ChEBI" id="CHEBI:57746"/>
    </ligand>
</feature>
<feature type="binding site" evidence="2">
    <location>
        <position position="496"/>
    </location>
    <ligand>
        <name>3',5'-cyclic GMP</name>
        <dbReference type="ChEBI" id="CHEBI:57746"/>
    </ligand>
</feature>
<feature type="binding site" evidence="2">
    <location>
        <position position="511"/>
    </location>
    <ligand>
        <name>3',5'-cyclic GMP</name>
        <dbReference type="ChEBI" id="CHEBI:57746"/>
    </ligand>
</feature>
<feature type="glycosylation site" description="N-linked (GlcNAc...) asparagine" evidence="2">
    <location>
        <position position="135"/>
    </location>
</feature>
<feature type="sequence conflict" description="In Ref. 1; CAA61760." evidence="5" ref="1">
    <original>G</original>
    <variation>R</variation>
    <location>
        <position position="73"/>
    </location>
</feature>
<organism>
    <name type="scientific">Drosophila melanogaster</name>
    <name type="common">Fruit fly</name>
    <dbReference type="NCBI Taxonomy" id="7227"/>
    <lineage>
        <taxon>Eukaryota</taxon>
        <taxon>Metazoa</taxon>
        <taxon>Ecdysozoa</taxon>
        <taxon>Arthropoda</taxon>
        <taxon>Hexapoda</taxon>
        <taxon>Insecta</taxon>
        <taxon>Pterygota</taxon>
        <taxon>Neoptera</taxon>
        <taxon>Endopterygota</taxon>
        <taxon>Diptera</taxon>
        <taxon>Brachycera</taxon>
        <taxon>Muscomorpha</taxon>
        <taxon>Ephydroidea</taxon>
        <taxon>Drosophilidae</taxon>
        <taxon>Drosophila</taxon>
        <taxon>Sophophora</taxon>
    </lineage>
</organism>
<dbReference type="EMBL" id="X89601">
    <property type="protein sequence ID" value="CAA61760.1"/>
    <property type="molecule type" value="mRNA"/>
</dbReference>
<dbReference type="EMBL" id="AE013599">
    <property type="protein sequence ID" value="AAF58033.1"/>
    <property type="molecule type" value="Genomic_DNA"/>
</dbReference>
<dbReference type="RefSeq" id="NP_477116.1">
    <property type="nucleotide sequence ID" value="NM_057768.3"/>
</dbReference>
<dbReference type="SMR" id="Q24278"/>
<dbReference type="FunCoup" id="Q24278">
    <property type="interactions" value="9"/>
</dbReference>
<dbReference type="IntAct" id="Q24278">
    <property type="interactions" value="2"/>
</dbReference>
<dbReference type="STRING" id="7227.FBpp0292051"/>
<dbReference type="TCDB" id="1.A.1.5.18">
    <property type="family name" value="the voltage-gated ion channel (vic) superfamily"/>
</dbReference>
<dbReference type="GlyCosmos" id="Q24278">
    <property type="glycosylation" value="1 site, No reported glycans"/>
</dbReference>
<dbReference type="GlyGen" id="Q24278">
    <property type="glycosylation" value="2 sites"/>
</dbReference>
<dbReference type="PaxDb" id="7227-FBpp0292051"/>
<dbReference type="EnsemblMetazoa" id="FBtr0302924">
    <property type="protein sequence ID" value="FBpp0292050"/>
    <property type="gene ID" value="FBgn0261612"/>
</dbReference>
<dbReference type="GeneID" id="36806"/>
<dbReference type="KEGG" id="dme:Dmel_CG42701"/>
<dbReference type="AGR" id="FB:FBgn0261612"/>
<dbReference type="CTD" id="36806"/>
<dbReference type="FlyBase" id="FBgn0261612">
    <property type="gene designation" value="CngA"/>
</dbReference>
<dbReference type="VEuPathDB" id="VectorBase:FBgn0261612"/>
<dbReference type="eggNOG" id="KOG0500">
    <property type="taxonomic scope" value="Eukaryota"/>
</dbReference>
<dbReference type="GeneTree" id="ENSGT00940000171789"/>
<dbReference type="HOGENOM" id="CLU_005746_12_1_1"/>
<dbReference type="InParanoid" id="Q24278"/>
<dbReference type="OrthoDB" id="421226at2759"/>
<dbReference type="PhylomeDB" id="Q24278"/>
<dbReference type="Reactome" id="R-DME-2485179">
    <property type="pathway name" value="Activation of the phototransduction cascade"/>
</dbReference>
<dbReference type="Reactome" id="R-DME-2514859">
    <property type="pathway name" value="Inactivation, recovery and regulation of the phototransduction cascade"/>
</dbReference>
<dbReference type="Reactome" id="R-DME-5620916">
    <property type="pathway name" value="VxPx cargo-targeting to cilium"/>
</dbReference>
<dbReference type="SignaLink" id="Q24278"/>
<dbReference type="BioGRID-ORCS" id="36806">
    <property type="hits" value="0 hits in 3 CRISPR screens"/>
</dbReference>
<dbReference type="GenomeRNAi" id="36806"/>
<dbReference type="PRO" id="PR:Q24278"/>
<dbReference type="Proteomes" id="UP000000803">
    <property type="component" value="Chromosome 2R"/>
</dbReference>
<dbReference type="Bgee" id="FBgn0261612">
    <property type="expression patterns" value="Expressed in lamina wide-field cell Lawf2 (Drosophila) in insect head and 43 other cell types or tissues"/>
</dbReference>
<dbReference type="ExpressionAtlas" id="Q24278">
    <property type="expression patterns" value="baseline and differential"/>
</dbReference>
<dbReference type="GO" id="GO:0017071">
    <property type="term" value="C:intracellular cyclic nucleotide activated cation channel complex"/>
    <property type="evidence" value="ECO:0000314"/>
    <property type="project" value="FlyBase"/>
</dbReference>
<dbReference type="GO" id="GO:0005886">
    <property type="term" value="C:plasma membrane"/>
    <property type="evidence" value="ECO:0000318"/>
    <property type="project" value="GO_Central"/>
</dbReference>
<dbReference type="GO" id="GO:0030553">
    <property type="term" value="F:cGMP binding"/>
    <property type="evidence" value="ECO:0000318"/>
    <property type="project" value="GO_Central"/>
</dbReference>
<dbReference type="GO" id="GO:0005222">
    <property type="term" value="F:intracellularly cAMP-activated cation channel activity"/>
    <property type="evidence" value="ECO:0000318"/>
    <property type="project" value="GO_Central"/>
</dbReference>
<dbReference type="GO" id="GO:0005223">
    <property type="term" value="F:intracellularly cGMP-activated cation channel activity"/>
    <property type="evidence" value="ECO:0000318"/>
    <property type="project" value="GO_Central"/>
</dbReference>
<dbReference type="GO" id="GO:0005221">
    <property type="term" value="F:intracellularly cyclic nucleotide-activated monoatomic cation channel activity"/>
    <property type="evidence" value="ECO:0000314"/>
    <property type="project" value="FlyBase"/>
</dbReference>
<dbReference type="GO" id="GO:0044877">
    <property type="term" value="F:protein-containing complex binding"/>
    <property type="evidence" value="ECO:0000318"/>
    <property type="project" value="GO_Central"/>
</dbReference>
<dbReference type="GO" id="GO:0098655">
    <property type="term" value="P:monoatomic cation transmembrane transport"/>
    <property type="evidence" value="ECO:0000314"/>
    <property type="project" value="FlyBase"/>
</dbReference>
<dbReference type="GO" id="GO:0001666">
    <property type="term" value="P:response to hypoxia"/>
    <property type="evidence" value="ECO:0000315"/>
    <property type="project" value="FlyBase"/>
</dbReference>
<dbReference type="CDD" id="cd00038">
    <property type="entry name" value="CAP_ED"/>
    <property type="match status" value="1"/>
</dbReference>
<dbReference type="FunFam" id="2.60.120.10:FF:000002">
    <property type="entry name" value="Cyclic nucleotide gated channel alpha 1a"/>
    <property type="match status" value="1"/>
</dbReference>
<dbReference type="FunFam" id="1.10.287.630:FF:000001">
    <property type="entry name" value="Cyclic nucleotide-gated channel alpha 3"/>
    <property type="match status" value="1"/>
</dbReference>
<dbReference type="FunFam" id="1.10.287.70:FF:000030">
    <property type="entry name" value="Cyclic nucleotide-gated channel alpha 3"/>
    <property type="match status" value="1"/>
</dbReference>
<dbReference type="FunFam" id="1.20.5.300:FF:000002">
    <property type="entry name" value="Cyclic nucleotide-gated channel alpha 3"/>
    <property type="match status" value="1"/>
</dbReference>
<dbReference type="Gene3D" id="1.10.287.70">
    <property type="match status" value="1"/>
</dbReference>
<dbReference type="Gene3D" id="1.20.5.300">
    <property type="match status" value="1"/>
</dbReference>
<dbReference type="Gene3D" id="1.10.287.630">
    <property type="entry name" value="Helix hairpin bin"/>
    <property type="match status" value="1"/>
</dbReference>
<dbReference type="Gene3D" id="2.60.120.10">
    <property type="entry name" value="Jelly Rolls"/>
    <property type="match status" value="1"/>
</dbReference>
<dbReference type="InterPro" id="IPR032406">
    <property type="entry name" value="CLZ_dom"/>
</dbReference>
<dbReference type="InterPro" id="IPR050866">
    <property type="entry name" value="CNG_cation_channel"/>
</dbReference>
<dbReference type="InterPro" id="IPR018488">
    <property type="entry name" value="cNMP-bd_CS"/>
</dbReference>
<dbReference type="InterPro" id="IPR000595">
    <property type="entry name" value="cNMP-bd_dom"/>
</dbReference>
<dbReference type="InterPro" id="IPR018490">
    <property type="entry name" value="cNMP-bd_dom_sf"/>
</dbReference>
<dbReference type="InterPro" id="IPR005821">
    <property type="entry name" value="Ion_trans_dom"/>
</dbReference>
<dbReference type="InterPro" id="IPR014710">
    <property type="entry name" value="RmlC-like_jellyroll"/>
</dbReference>
<dbReference type="PANTHER" id="PTHR45638">
    <property type="entry name" value="CYCLIC NUCLEOTIDE-GATED CATION CHANNEL SUBUNIT A"/>
    <property type="match status" value="1"/>
</dbReference>
<dbReference type="PANTHER" id="PTHR45638:SF11">
    <property type="entry name" value="CYCLIC NUCLEOTIDE-GATED CATION CHANNEL SUBUNIT A"/>
    <property type="match status" value="1"/>
</dbReference>
<dbReference type="Pfam" id="PF16526">
    <property type="entry name" value="CLZ"/>
    <property type="match status" value="1"/>
</dbReference>
<dbReference type="Pfam" id="PF00027">
    <property type="entry name" value="cNMP_binding"/>
    <property type="match status" value="1"/>
</dbReference>
<dbReference type="Pfam" id="PF00520">
    <property type="entry name" value="Ion_trans"/>
    <property type="match status" value="1"/>
</dbReference>
<dbReference type="SMART" id="SM00100">
    <property type="entry name" value="cNMP"/>
    <property type="match status" value="1"/>
</dbReference>
<dbReference type="SUPFAM" id="SSF51206">
    <property type="entry name" value="cAMP-binding domain-like"/>
    <property type="match status" value="1"/>
</dbReference>
<dbReference type="SUPFAM" id="SSF81324">
    <property type="entry name" value="Voltage-gated potassium channels"/>
    <property type="match status" value="1"/>
</dbReference>
<dbReference type="PROSITE" id="PS00888">
    <property type="entry name" value="CNMP_BINDING_1"/>
    <property type="match status" value="1"/>
</dbReference>
<dbReference type="PROSITE" id="PS00889">
    <property type="entry name" value="CNMP_BINDING_2"/>
    <property type="match status" value="1"/>
</dbReference>
<dbReference type="PROSITE" id="PS50042">
    <property type="entry name" value="CNMP_BINDING_3"/>
    <property type="match status" value="1"/>
</dbReference>
<accession>Q24278</accession>
<accession>Q9V7L5</accession>
<reference key="1">
    <citation type="journal article" date="1994" name="EMBO J.">
        <title>Primary structure and functional expression of a Drosophila cyclic nucleotide-gated channel present in eyes and antennae.</title>
        <authorList>
            <person name="Baumann A."/>
            <person name="Frings S."/>
            <person name="Godde M."/>
            <person name="Seifert R."/>
            <person name="Kaupp U.B."/>
        </authorList>
    </citation>
    <scope>NUCLEOTIDE SEQUENCE [MRNA]</scope>
    <scope>FUNCTION</scope>
    <scope>TISSUE SPECIFICITY</scope>
</reference>
<reference key="2">
    <citation type="journal article" date="2000" name="Science">
        <title>The genome sequence of Drosophila melanogaster.</title>
        <authorList>
            <person name="Adams M.D."/>
            <person name="Celniker S.E."/>
            <person name="Holt R.A."/>
            <person name="Evans C.A."/>
            <person name="Gocayne J.D."/>
            <person name="Amanatides P.G."/>
            <person name="Scherer S.E."/>
            <person name="Li P.W."/>
            <person name="Hoskins R.A."/>
            <person name="Galle R.F."/>
            <person name="George R.A."/>
            <person name="Lewis S.E."/>
            <person name="Richards S."/>
            <person name="Ashburner M."/>
            <person name="Henderson S.N."/>
            <person name="Sutton G.G."/>
            <person name="Wortman J.R."/>
            <person name="Yandell M.D."/>
            <person name="Zhang Q."/>
            <person name="Chen L.X."/>
            <person name="Brandon R.C."/>
            <person name="Rogers Y.-H.C."/>
            <person name="Blazej R.G."/>
            <person name="Champe M."/>
            <person name="Pfeiffer B.D."/>
            <person name="Wan K.H."/>
            <person name="Doyle C."/>
            <person name="Baxter E.G."/>
            <person name="Helt G."/>
            <person name="Nelson C.R."/>
            <person name="Miklos G.L.G."/>
            <person name="Abril J.F."/>
            <person name="Agbayani A."/>
            <person name="An H.-J."/>
            <person name="Andrews-Pfannkoch C."/>
            <person name="Baldwin D."/>
            <person name="Ballew R.M."/>
            <person name="Basu A."/>
            <person name="Baxendale J."/>
            <person name="Bayraktaroglu L."/>
            <person name="Beasley E.M."/>
            <person name="Beeson K.Y."/>
            <person name="Benos P.V."/>
            <person name="Berman B.P."/>
            <person name="Bhandari D."/>
            <person name="Bolshakov S."/>
            <person name="Borkova D."/>
            <person name="Botchan M.R."/>
            <person name="Bouck J."/>
            <person name="Brokstein P."/>
            <person name="Brottier P."/>
            <person name="Burtis K.C."/>
            <person name="Busam D.A."/>
            <person name="Butler H."/>
            <person name="Cadieu E."/>
            <person name="Center A."/>
            <person name="Chandra I."/>
            <person name="Cherry J.M."/>
            <person name="Cawley S."/>
            <person name="Dahlke C."/>
            <person name="Davenport L.B."/>
            <person name="Davies P."/>
            <person name="de Pablos B."/>
            <person name="Delcher A."/>
            <person name="Deng Z."/>
            <person name="Mays A.D."/>
            <person name="Dew I."/>
            <person name="Dietz S.M."/>
            <person name="Dodson K."/>
            <person name="Doup L.E."/>
            <person name="Downes M."/>
            <person name="Dugan-Rocha S."/>
            <person name="Dunkov B.C."/>
            <person name="Dunn P."/>
            <person name="Durbin K.J."/>
            <person name="Evangelista C.C."/>
            <person name="Ferraz C."/>
            <person name="Ferriera S."/>
            <person name="Fleischmann W."/>
            <person name="Fosler C."/>
            <person name="Gabrielian A.E."/>
            <person name="Garg N.S."/>
            <person name="Gelbart W.M."/>
            <person name="Glasser K."/>
            <person name="Glodek A."/>
            <person name="Gong F."/>
            <person name="Gorrell J.H."/>
            <person name="Gu Z."/>
            <person name="Guan P."/>
            <person name="Harris M."/>
            <person name="Harris N.L."/>
            <person name="Harvey D.A."/>
            <person name="Heiman T.J."/>
            <person name="Hernandez J.R."/>
            <person name="Houck J."/>
            <person name="Hostin D."/>
            <person name="Houston K.A."/>
            <person name="Howland T.J."/>
            <person name="Wei M.-H."/>
            <person name="Ibegwam C."/>
            <person name="Jalali M."/>
            <person name="Kalush F."/>
            <person name="Karpen G.H."/>
            <person name="Ke Z."/>
            <person name="Kennison J.A."/>
            <person name="Ketchum K.A."/>
            <person name="Kimmel B.E."/>
            <person name="Kodira C.D."/>
            <person name="Kraft C.L."/>
            <person name="Kravitz S."/>
            <person name="Kulp D."/>
            <person name="Lai Z."/>
            <person name="Lasko P."/>
            <person name="Lei Y."/>
            <person name="Levitsky A.A."/>
            <person name="Li J.H."/>
            <person name="Li Z."/>
            <person name="Liang Y."/>
            <person name="Lin X."/>
            <person name="Liu X."/>
            <person name="Mattei B."/>
            <person name="McIntosh T.C."/>
            <person name="McLeod M.P."/>
            <person name="McPherson D."/>
            <person name="Merkulov G."/>
            <person name="Milshina N.V."/>
            <person name="Mobarry C."/>
            <person name="Morris J."/>
            <person name="Moshrefi A."/>
            <person name="Mount S.M."/>
            <person name="Moy M."/>
            <person name="Murphy B."/>
            <person name="Murphy L."/>
            <person name="Muzny D.M."/>
            <person name="Nelson D.L."/>
            <person name="Nelson D.R."/>
            <person name="Nelson K.A."/>
            <person name="Nixon K."/>
            <person name="Nusskern D.R."/>
            <person name="Pacleb J.M."/>
            <person name="Palazzolo M."/>
            <person name="Pittman G.S."/>
            <person name="Pan S."/>
            <person name="Pollard J."/>
            <person name="Puri V."/>
            <person name="Reese M.G."/>
            <person name="Reinert K."/>
            <person name="Remington K."/>
            <person name="Saunders R.D.C."/>
            <person name="Scheeler F."/>
            <person name="Shen H."/>
            <person name="Shue B.C."/>
            <person name="Siden-Kiamos I."/>
            <person name="Simpson M."/>
            <person name="Skupski M.P."/>
            <person name="Smith T.J."/>
            <person name="Spier E."/>
            <person name="Spradling A.C."/>
            <person name="Stapleton M."/>
            <person name="Strong R."/>
            <person name="Sun E."/>
            <person name="Svirskas R."/>
            <person name="Tector C."/>
            <person name="Turner R."/>
            <person name="Venter E."/>
            <person name="Wang A.H."/>
            <person name="Wang X."/>
            <person name="Wang Z.-Y."/>
            <person name="Wassarman D.A."/>
            <person name="Weinstock G.M."/>
            <person name="Weissenbach J."/>
            <person name="Williams S.M."/>
            <person name="Woodage T."/>
            <person name="Worley K.C."/>
            <person name="Wu D."/>
            <person name="Yang S."/>
            <person name="Yao Q.A."/>
            <person name="Ye J."/>
            <person name="Yeh R.-F."/>
            <person name="Zaveri J.S."/>
            <person name="Zhan M."/>
            <person name="Zhang G."/>
            <person name="Zhao Q."/>
            <person name="Zheng L."/>
            <person name="Zheng X.H."/>
            <person name="Zhong F.N."/>
            <person name="Zhong W."/>
            <person name="Zhou X."/>
            <person name="Zhu S.C."/>
            <person name="Zhu X."/>
            <person name="Smith H.O."/>
            <person name="Gibbs R.A."/>
            <person name="Myers E.W."/>
            <person name="Rubin G.M."/>
            <person name="Venter J.C."/>
        </authorList>
    </citation>
    <scope>NUCLEOTIDE SEQUENCE [LARGE SCALE GENOMIC DNA]</scope>
    <source>
        <strain>Berkeley</strain>
    </source>
</reference>
<reference key="3">
    <citation type="journal article" date="2002" name="Genome Biol.">
        <title>Annotation of the Drosophila melanogaster euchromatic genome: a systematic review.</title>
        <authorList>
            <person name="Misra S."/>
            <person name="Crosby M.A."/>
            <person name="Mungall C.J."/>
            <person name="Matthews B.B."/>
            <person name="Campbell K.S."/>
            <person name="Hradecky P."/>
            <person name="Huang Y."/>
            <person name="Kaminker J.S."/>
            <person name="Millburn G.H."/>
            <person name="Prochnik S.E."/>
            <person name="Smith C.D."/>
            <person name="Tupy J.L."/>
            <person name="Whitfield E.J."/>
            <person name="Bayraktaroglu L."/>
            <person name="Berman B.P."/>
            <person name="Bettencourt B.R."/>
            <person name="Celniker S.E."/>
            <person name="de Grey A.D.N.J."/>
            <person name="Drysdale R.A."/>
            <person name="Harris N.L."/>
            <person name="Richter J."/>
            <person name="Russo S."/>
            <person name="Schroeder A.J."/>
            <person name="Shu S.Q."/>
            <person name="Stapleton M."/>
            <person name="Yamada C."/>
            <person name="Ashburner M."/>
            <person name="Gelbart W.M."/>
            <person name="Rubin G.M."/>
            <person name="Lewis S.E."/>
        </authorList>
    </citation>
    <scope>GENOME REANNOTATION</scope>
    <source>
        <strain>Berkeley</strain>
    </source>
</reference>
<protein>
    <recommendedName>
        <fullName>Cyclic nucleotide-gated cation channel subunit A</fullName>
    </recommendedName>
    <alternativeName>
        <fullName>Cyclic nucleotide-gated ion channel subunit A</fullName>
        <shortName>CNG channel</shortName>
    </alternativeName>
</protein>
<name>CNGA_DROME</name>
<sequence length="665" mass="75823">MRHFKVKAMVQSLDISAITGQQTDAEPSKRSKPSALRRTLQALRQRLTKRNRPKPPDWFLEKFSNTTNTDKIGKGCPAMEDAALSSEIRGSSVLCNRLSVDPTLQSHYRWLAIVSLAVLYNIIFVVGRAVFWEINKSAPAFWYTLDYLCDFIYLLDTLVHMHEGFLDQGLLVRDAFRLRRHYFHTKGWYLDVLSMLPTDLAYIWWPPETCSSLYLPCPVIVRLNRLLRINRLWEWFDRTETATGYPNAFRICKVVLAILVLIHWNACMYFAISYEIGFSSDSWVYNLNGTRNNTLQRQYIYSFYWSTLTLTTIGETPTPENDVEYLFVVADFLAGVLIFATIVGNIGSMISNMNVARVEFQNRMDGVKQYMAFRRVGHELEARVIRWFAYTWSQSGALDEERVLAALPDKLKAEIAIQVHMDTLKQVRIFHDTEPGLLEALVLKLKLQVFSPGDYICRKGDVGKEMYIVKRGKLSVVGDDGITVLATLGAGSVFGEVSVLEIAGNRTGNRRTANVRSLGYSDLFCLAKRDLWETLSDYPEARSTLTQRGCQLLRKDGLLDEQIFADSQRVHDSIEGGIEKLELSVENLNMRLARLLAEYTASQAKIKQRLAKLEMNGGPGTWRLECEPQSRARSGRLYSLQPKRRPRSRPDATAKSSDAAKQNTL</sequence>